<comment type="function">
    <text evidence="1">Catalyzes the phosphorylation of the 3'-hydroxyl group of dephosphocoenzyme A to form coenzyme A.</text>
</comment>
<comment type="catalytic activity">
    <reaction evidence="1">
        <text>3'-dephospho-CoA + ATP = ADP + CoA + H(+)</text>
        <dbReference type="Rhea" id="RHEA:18245"/>
        <dbReference type="ChEBI" id="CHEBI:15378"/>
        <dbReference type="ChEBI" id="CHEBI:30616"/>
        <dbReference type="ChEBI" id="CHEBI:57287"/>
        <dbReference type="ChEBI" id="CHEBI:57328"/>
        <dbReference type="ChEBI" id="CHEBI:456216"/>
        <dbReference type="EC" id="2.7.1.24"/>
    </reaction>
</comment>
<comment type="pathway">
    <text evidence="1">Cofactor biosynthesis; coenzyme A biosynthesis; CoA from (R)-pantothenate: step 5/5.</text>
</comment>
<comment type="subcellular location">
    <subcellularLocation>
        <location evidence="1">Cytoplasm</location>
    </subcellularLocation>
</comment>
<comment type="similarity">
    <text evidence="1">Belongs to the CoaE family.</text>
</comment>
<keyword id="KW-0067">ATP-binding</keyword>
<keyword id="KW-0173">Coenzyme A biosynthesis</keyword>
<keyword id="KW-0963">Cytoplasm</keyword>
<keyword id="KW-0418">Kinase</keyword>
<keyword id="KW-0547">Nucleotide-binding</keyword>
<keyword id="KW-1185">Reference proteome</keyword>
<keyword id="KW-0808">Transferase</keyword>
<accession>Q31RL4</accession>
<feature type="chain" id="PRO_0000243356" description="Dephospho-CoA kinase">
    <location>
        <begin position="1"/>
        <end position="209"/>
    </location>
</feature>
<feature type="domain" description="DPCK" evidence="1">
    <location>
        <begin position="13"/>
        <end position="209"/>
    </location>
</feature>
<feature type="binding site" evidence="1">
    <location>
        <begin position="21"/>
        <end position="26"/>
    </location>
    <ligand>
        <name>ATP</name>
        <dbReference type="ChEBI" id="CHEBI:30616"/>
    </ligand>
</feature>
<sequence length="209" mass="23628">MGAPNHVNFVRRRIGLTGGIATGKSTVADYLRDRYQLPILDADRYAREVVAVGSPVLQVIRDRYGASILLADGQLDRQKLGSIIFADPAERQWLEQQTHPAIRACFERDLAQLESDPIVVLVIPLLFEAGLQDWVEQIWVVACPLEQQRDRLIHRDRLTPAAAEQRLAAQWPIAQKCEHADIVIDNSRDRTFTFQQVDQAIEKVVVAEN</sequence>
<proteinExistence type="inferred from homology"/>
<name>COAE_SYNE7</name>
<reference key="1">
    <citation type="submission" date="2005-08" db="EMBL/GenBank/DDBJ databases">
        <title>Complete sequence of chromosome 1 of Synechococcus elongatus PCC 7942.</title>
        <authorList>
            <consortium name="US DOE Joint Genome Institute"/>
            <person name="Copeland A."/>
            <person name="Lucas S."/>
            <person name="Lapidus A."/>
            <person name="Barry K."/>
            <person name="Detter J.C."/>
            <person name="Glavina T."/>
            <person name="Hammon N."/>
            <person name="Israni S."/>
            <person name="Pitluck S."/>
            <person name="Schmutz J."/>
            <person name="Larimer F."/>
            <person name="Land M."/>
            <person name="Kyrpides N."/>
            <person name="Lykidis A."/>
            <person name="Golden S."/>
            <person name="Richardson P."/>
        </authorList>
    </citation>
    <scope>NUCLEOTIDE SEQUENCE [LARGE SCALE GENOMIC DNA]</scope>
    <source>
        <strain>ATCC 33912 / PCC 7942 / FACHB-805</strain>
    </source>
</reference>
<evidence type="ECO:0000255" key="1">
    <source>
        <dbReference type="HAMAP-Rule" id="MF_00376"/>
    </source>
</evidence>
<dbReference type="EC" id="2.7.1.24" evidence="1"/>
<dbReference type="EMBL" id="CP000100">
    <property type="protein sequence ID" value="ABB56305.1"/>
    <property type="molecule type" value="Genomic_DNA"/>
</dbReference>
<dbReference type="RefSeq" id="WP_011243552.1">
    <property type="nucleotide sequence ID" value="NZ_JACJTX010000002.1"/>
</dbReference>
<dbReference type="SMR" id="Q31RL4"/>
<dbReference type="STRING" id="1140.Synpcc7942_0273"/>
<dbReference type="PaxDb" id="1140-Synpcc7942_0273"/>
<dbReference type="GeneID" id="72429088"/>
<dbReference type="KEGG" id="syf:Synpcc7942_0273"/>
<dbReference type="eggNOG" id="COG0237">
    <property type="taxonomic scope" value="Bacteria"/>
</dbReference>
<dbReference type="HOGENOM" id="CLU_057180_0_0_3"/>
<dbReference type="OrthoDB" id="9812943at2"/>
<dbReference type="BioCyc" id="SYNEL:SYNPCC7942_0273-MONOMER"/>
<dbReference type="UniPathway" id="UPA00241">
    <property type="reaction ID" value="UER00356"/>
</dbReference>
<dbReference type="Proteomes" id="UP000889800">
    <property type="component" value="Chromosome"/>
</dbReference>
<dbReference type="GO" id="GO:0005737">
    <property type="term" value="C:cytoplasm"/>
    <property type="evidence" value="ECO:0007669"/>
    <property type="project" value="UniProtKB-SubCell"/>
</dbReference>
<dbReference type="GO" id="GO:0005524">
    <property type="term" value="F:ATP binding"/>
    <property type="evidence" value="ECO:0007669"/>
    <property type="project" value="UniProtKB-UniRule"/>
</dbReference>
<dbReference type="GO" id="GO:0004140">
    <property type="term" value="F:dephospho-CoA kinase activity"/>
    <property type="evidence" value="ECO:0007669"/>
    <property type="project" value="UniProtKB-UniRule"/>
</dbReference>
<dbReference type="GO" id="GO:0015937">
    <property type="term" value="P:coenzyme A biosynthetic process"/>
    <property type="evidence" value="ECO:0007669"/>
    <property type="project" value="UniProtKB-UniRule"/>
</dbReference>
<dbReference type="CDD" id="cd02022">
    <property type="entry name" value="DPCK"/>
    <property type="match status" value="1"/>
</dbReference>
<dbReference type="FunFam" id="3.40.50.300:FF:000991">
    <property type="entry name" value="Dephospho-CoA kinase"/>
    <property type="match status" value="1"/>
</dbReference>
<dbReference type="Gene3D" id="3.40.50.300">
    <property type="entry name" value="P-loop containing nucleotide triphosphate hydrolases"/>
    <property type="match status" value="1"/>
</dbReference>
<dbReference type="HAMAP" id="MF_00376">
    <property type="entry name" value="Dephospho_CoA_kinase"/>
    <property type="match status" value="1"/>
</dbReference>
<dbReference type="InterPro" id="IPR001977">
    <property type="entry name" value="Depp_CoAkinase"/>
</dbReference>
<dbReference type="InterPro" id="IPR027417">
    <property type="entry name" value="P-loop_NTPase"/>
</dbReference>
<dbReference type="NCBIfam" id="TIGR00152">
    <property type="entry name" value="dephospho-CoA kinase"/>
    <property type="match status" value="1"/>
</dbReference>
<dbReference type="PANTHER" id="PTHR10695:SF46">
    <property type="entry name" value="BIFUNCTIONAL COENZYME A SYNTHASE-RELATED"/>
    <property type="match status" value="1"/>
</dbReference>
<dbReference type="PANTHER" id="PTHR10695">
    <property type="entry name" value="DEPHOSPHO-COA KINASE-RELATED"/>
    <property type="match status" value="1"/>
</dbReference>
<dbReference type="Pfam" id="PF01121">
    <property type="entry name" value="CoaE"/>
    <property type="match status" value="1"/>
</dbReference>
<dbReference type="SUPFAM" id="SSF52540">
    <property type="entry name" value="P-loop containing nucleoside triphosphate hydrolases"/>
    <property type="match status" value="1"/>
</dbReference>
<dbReference type="PROSITE" id="PS51219">
    <property type="entry name" value="DPCK"/>
    <property type="match status" value="1"/>
</dbReference>
<gene>
    <name evidence="1" type="primary">coaE</name>
    <name type="ordered locus">Synpcc7942_0273</name>
</gene>
<protein>
    <recommendedName>
        <fullName evidence="1">Dephospho-CoA kinase</fullName>
        <ecNumber evidence="1">2.7.1.24</ecNumber>
    </recommendedName>
    <alternativeName>
        <fullName evidence="1">Dephosphocoenzyme A kinase</fullName>
    </alternativeName>
</protein>
<organism>
    <name type="scientific">Synechococcus elongatus (strain ATCC 33912 / PCC 7942 / FACHB-805)</name>
    <name type="common">Anacystis nidulans R2</name>
    <dbReference type="NCBI Taxonomy" id="1140"/>
    <lineage>
        <taxon>Bacteria</taxon>
        <taxon>Bacillati</taxon>
        <taxon>Cyanobacteriota</taxon>
        <taxon>Cyanophyceae</taxon>
        <taxon>Synechococcales</taxon>
        <taxon>Synechococcaceae</taxon>
        <taxon>Synechococcus</taxon>
    </lineage>
</organism>